<keyword id="KW-1015">Disulfide bond</keyword>
<keyword id="KW-1170">Fusion of virus membrane with host endosomal membrane</keyword>
<keyword id="KW-1168">Fusion of virus membrane with host membrane</keyword>
<keyword id="KW-0325">Glycoprotein</keyword>
<keyword id="KW-0348">Hemagglutinin</keyword>
<keyword id="KW-1032">Host cell membrane</keyword>
<keyword id="KW-1043">Host membrane</keyword>
<keyword id="KW-0945">Host-virus interaction</keyword>
<keyword id="KW-0449">Lipoprotein</keyword>
<keyword id="KW-0472">Membrane</keyword>
<keyword id="KW-0564">Palmitate</keyword>
<keyword id="KW-0732">Signal</keyword>
<keyword id="KW-0812">Transmembrane</keyword>
<keyword id="KW-1161">Viral attachment to host cell</keyword>
<keyword id="KW-0261">Viral envelope protein</keyword>
<keyword id="KW-1162">Viral penetration into host cytoplasm</keyword>
<keyword id="KW-0946">Virion</keyword>
<keyword id="KW-1160">Virus entry into host cell</keyword>
<protein>
    <recommendedName>
        <fullName>Hemagglutinin</fullName>
    </recommendedName>
    <component>
        <recommendedName>
            <fullName>Hemagglutinin HA1 chain</fullName>
        </recommendedName>
    </component>
</protein>
<proteinExistence type="inferred from homology"/>
<organismHost>
    <name type="scientific">Homo sapiens</name>
    <name type="common">Human</name>
    <dbReference type="NCBI Taxonomy" id="9606"/>
</organismHost>
<evidence type="ECO:0000250" key="1"/>
<evidence type="ECO:0000255" key="2"/>
<evidence type="ECO:0000305" key="3"/>
<gene>
    <name type="primary">HA</name>
</gene>
<comment type="function">
    <text>Binds to sialic acid-containing receptors on the cell surface, bringing about the attachment of the virus particle to the cell. Plays a major role in the determination of host range restriction and virulence. Class I viral fusion protein. Responsible for penetration of the virus into the cell cytoplasm by mediating the fusion of the membrane of the endocytosed virus particle with the endosomal membrane. Low pH in endosomes induce an irreversible conformational change in HA2, releasing the fusion hydrophobic peptide. Several trimers are required to form a competent fusion pore.</text>
</comment>
<comment type="subunit">
    <text>Homotrimer of disulfide-linked HA1-HA2.</text>
</comment>
<comment type="subcellular location">
    <subcellularLocation>
        <location evidence="3">Virion membrane</location>
        <topology evidence="3">Single-pass type I membrane protein</topology>
    </subcellularLocation>
    <subcellularLocation>
        <location>Host apical cell membrane</location>
        <topology>Single-pass type I membrane protein</topology>
    </subcellularLocation>
    <text>Targeted to the apical plasma membrane in epithelial polarized cells through a signal present in the transmembrane domain. Associated with glycosphingolipid- and cholesterol-enriched detergent-resistant lipid rafts.</text>
</comment>
<comment type="PTM">
    <text evidence="1">In natural infection, inactive HA is matured into HA1 and HA2 outside the cell by one or more trypsin-like, arginine-specific endoprotease secreted by the bronchial epithelial cells. One identified protease that may be involved in this process is secreted in lungs by club cells (By similarity).</text>
</comment>
<comment type="PTM">
    <text evidence="1">Palmitoylated.</text>
</comment>
<comment type="miscellaneous">
    <text>Major glycoprotein, comprises over 80% of the envelope proteins present in virus particle.</text>
</comment>
<comment type="miscellaneous">
    <text>The extent of infection into host organism is determined by HA. Influenza viruses bud from the apical surface of polarized epithelial cells (e.g. bronchial epithelial cells) into lumen of lungs and are therefore usually pneumotropic. The reason is that HA is cleaved by tryptase clara which is restricted to lungs. However, HAs of H5 and H7 pantropic avian viruses subtypes can be cleaved by furin and subtilisin-type enzymes, allowing the virus to grow in other organs than lungs.</text>
</comment>
<comment type="miscellaneous">
    <text>The influenza B genome consist of 8 RNA segments. Genetic variation of hemagglutinin and/or neuraminidase genes results in the emergence of new influenza strains. The mechanism of variation can be the result of point mutations or the result of genetic reassortment between segments of two different strains.</text>
</comment>
<comment type="similarity">
    <text evidence="3">Belongs to the influenza viruses hemagglutinin family.</text>
</comment>
<name>HEMA_INBHM</name>
<feature type="signal peptide" evidence="2">
    <location>
        <begin position="1"/>
        <end position="15"/>
    </location>
</feature>
<feature type="chain" id="PRO_0000039109" description="Hemagglutinin HA1 chain" evidence="1">
    <location>
        <begin position="16"/>
        <end position="360"/>
    </location>
</feature>
<feature type="glycosylation site" description="N-linked (GlcNAc...) asparagine; by host" evidence="2">
    <location>
        <position position="40"/>
    </location>
</feature>
<feature type="glycosylation site" description="N-linked (GlcNAc...) asparagine; by host" evidence="2">
    <location>
        <position position="74"/>
    </location>
</feature>
<feature type="glycosylation site" description="N-linked (GlcNAc...) asparagine; by host" evidence="2">
    <location>
        <position position="160"/>
    </location>
</feature>
<feature type="glycosylation site" description="N-linked (GlcNAc...) asparagine; by host" evidence="2">
    <location>
        <position position="179"/>
    </location>
</feature>
<feature type="glycosylation site" description="N-linked (GlcNAc...) asparagine; by host" evidence="2">
    <location>
        <position position="246"/>
    </location>
</feature>
<feature type="glycosylation site" description="N-linked (GlcNAc...) asparagine; by host" evidence="2">
    <location>
        <position position="317"/>
    </location>
</feature>
<feature type="glycosylation site" description="N-linked (GlcNAc...) asparagine; by host" evidence="2">
    <location>
        <position position="346"/>
    </location>
</feature>
<feature type="non-terminal residue">
    <location>
        <position position="360"/>
    </location>
</feature>
<organism>
    <name type="scientific">Influenza B virus (strain B/Hong Kong/22/1989)</name>
    <dbReference type="NCBI Taxonomy" id="416675"/>
    <lineage>
        <taxon>Viruses</taxon>
        <taxon>Riboviria</taxon>
        <taxon>Orthornavirae</taxon>
        <taxon>Negarnaviricota</taxon>
        <taxon>Polyploviricotina</taxon>
        <taxon>Insthoviricetes</taxon>
        <taxon>Articulavirales</taxon>
        <taxon>Orthomyxoviridae</taxon>
        <taxon>Betainfluenzavirus</taxon>
        <taxon>Betainfluenzavirus influenzae</taxon>
        <taxon>Influenza B virus</taxon>
    </lineage>
</organism>
<reference key="1">
    <citation type="journal article" date="1992" name="J. Gen. Virol.">
        <title>Antigenic and genetic characterization of the haemagglutinins of recent cocirculating strains of influenza B virus.</title>
        <authorList>
            <person name="Rota P.A."/>
            <person name="Hemphill M."/>
            <person name="Whistler T."/>
            <person name="Regnery H.L."/>
            <person name="Kendal A.P."/>
        </authorList>
    </citation>
    <scope>NUCLEOTIDE SEQUENCE [GENOMIC RNA]</scope>
</reference>
<dbReference type="EMBL" id="M65167">
    <property type="protein sequence ID" value="AAA43705.1"/>
    <property type="molecule type" value="Genomic_RNA"/>
</dbReference>
<dbReference type="PIR" id="JQ1909">
    <property type="entry name" value="JQ1909"/>
</dbReference>
<dbReference type="SMR" id="Q67371"/>
<dbReference type="GlyCosmos" id="Q67371">
    <property type="glycosylation" value="7 sites, No reported glycans"/>
</dbReference>
<dbReference type="GO" id="GO:0020002">
    <property type="term" value="C:host cell plasma membrane"/>
    <property type="evidence" value="ECO:0007669"/>
    <property type="project" value="UniProtKB-SubCell"/>
</dbReference>
<dbReference type="GO" id="GO:0016020">
    <property type="term" value="C:membrane"/>
    <property type="evidence" value="ECO:0007669"/>
    <property type="project" value="UniProtKB-KW"/>
</dbReference>
<dbReference type="GO" id="GO:0019031">
    <property type="term" value="C:viral envelope"/>
    <property type="evidence" value="ECO:0007669"/>
    <property type="project" value="UniProtKB-KW"/>
</dbReference>
<dbReference type="GO" id="GO:0055036">
    <property type="term" value="C:virion membrane"/>
    <property type="evidence" value="ECO:0007669"/>
    <property type="project" value="UniProtKB-SubCell"/>
</dbReference>
<dbReference type="GO" id="GO:0046789">
    <property type="term" value="F:host cell surface receptor binding"/>
    <property type="evidence" value="ECO:0007669"/>
    <property type="project" value="InterPro"/>
</dbReference>
<dbReference type="GO" id="GO:0039654">
    <property type="term" value="P:fusion of virus membrane with host endosome membrane"/>
    <property type="evidence" value="ECO:0007669"/>
    <property type="project" value="UniProtKB-KW"/>
</dbReference>
<dbReference type="GO" id="GO:0019064">
    <property type="term" value="P:fusion of virus membrane with host plasma membrane"/>
    <property type="evidence" value="ECO:0007669"/>
    <property type="project" value="InterPro"/>
</dbReference>
<dbReference type="GO" id="GO:0046718">
    <property type="term" value="P:symbiont entry into host cell"/>
    <property type="evidence" value="ECO:0007669"/>
    <property type="project" value="UniProtKB-KW"/>
</dbReference>
<dbReference type="GO" id="GO:0019062">
    <property type="term" value="P:virion attachment to host cell"/>
    <property type="evidence" value="ECO:0007669"/>
    <property type="project" value="UniProtKB-KW"/>
</dbReference>
<dbReference type="Gene3D" id="3.90.209.20">
    <property type="match status" value="1"/>
</dbReference>
<dbReference type="Gene3D" id="2.10.77.10">
    <property type="entry name" value="Hemagglutinin Chain A, Domain 2"/>
    <property type="match status" value="1"/>
</dbReference>
<dbReference type="InterPro" id="IPR008980">
    <property type="entry name" value="Capsid_hemagglutn"/>
</dbReference>
<dbReference type="InterPro" id="IPR013828">
    <property type="entry name" value="Hemagglutn_HA1_a/b_dom_sf"/>
</dbReference>
<dbReference type="InterPro" id="IPR001364">
    <property type="entry name" value="Hemagglutn_influenz_A/B"/>
</dbReference>
<dbReference type="Pfam" id="PF00509">
    <property type="entry name" value="Hemagglutinin"/>
    <property type="match status" value="1"/>
</dbReference>
<dbReference type="SUPFAM" id="SSF49818">
    <property type="entry name" value="Viral protein domain"/>
    <property type="match status" value="1"/>
</dbReference>
<sequence>MKAIIVLLMVVTSNADRICTGITSSNSPHVVKTATQGEVNVTGVIPLTTTPTKSHFANLKGTKTRGKLCPNCLNCTDLDVALARPMCVGTTPSAKASILHEVRPVTSGCFPIMHDRTKIRQLPNLLRGYENIRLSTQNVINAERAPGGPYRLGTSGSCPNVTSRDGFFATMAWAVPRDNKTATNPLTVEVPYICTKGEDQITVWGFHSDSKTQMKNLYGDSNPQKFTSSANGVTTHYVSQIGGFPNQTEDGGLPQSGRIVVDYMVQKPGKTGTIVYQRGVLLPQKVWCASGRSKVIKGSLPLIGEADCLHEKYGGLNKSKPYYTGEHAKAIGNCPIWVKTPLKLANGTKYRPPAKLLKER</sequence>
<accession>Q67371</accession>